<dbReference type="EC" id="2.1.1.178" evidence="1"/>
<dbReference type="EMBL" id="CP000961">
    <property type="protein sequence ID" value="ACA86270.1"/>
    <property type="molecule type" value="Genomic_DNA"/>
</dbReference>
<dbReference type="RefSeq" id="WP_012324616.1">
    <property type="nucleotide sequence ID" value="NC_010506.1"/>
</dbReference>
<dbReference type="SMR" id="B1KQN1"/>
<dbReference type="STRING" id="392500.Swoo_1986"/>
<dbReference type="KEGG" id="swd:Swoo_1986"/>
<dbReference type="eggNOG" id="COG0144">
    <property type="taxonomic scope" value="Bacteria"/>
</dbReference>
<dbReference type="eggNOG" id="COG3270">
    <property type="taxonomic scope" value="Bacteria"/>
</dbReference>
<dbReference type="HOGENOM" id="CLU_005316_6_2_6"/>
<dbReference type="Proteomes" id="UP000002168">
    <property type="component" value="Chromosome"/>
</dbReference>
<dbReference type="GO" id="GO:0005737">
    <property type="term" value="C:cytoplasm"/>
    <property type="evidence" value="ECO:0007669"/>
    <property type="project" value="UniProtKB-SubCell"/>
</dbReference>
<dbReference type="GO" id="GO:0003723">
    <property type="term" value="F:RNA binding"/>
    <property type="evidence" value="ECO:0007669"/>
    <property type="project" value="UniProtKB-KW"/>
</dbReference>
<dbReference type="GO" id="GO:0009383">
    <property type="term" value="F:rRNA (cytosine-C5-)-methyltransferase activity"/>
    <property type="evidence" value="ECO:0007669"/>
    <property type="project" value="TreeGrafter"/>
</dbReference>
<dbReference type="GO" id="GO:0070475">
    <property type="term" value="P:rRNA base methylation"/>
    <property type="evidence" value="ECO:0007669"/>
    <property type="project" value="TreeGrafter"/>
</dbReference>
<dbReference type="CDD" id="cd02440">
    <property type="entry name" value="AdoMet_MTases"/>
    <property type="match status" value="1"/>
</dbReference>
<dbReference type="Gene3D" id="3.10.450.720">
    <property type="match status" value="1"/>
</dbReference>
<dbReference type="Gene3D" id="3.40.50.150">
    <property type="entry name" value="Vaccinia Virus protein VP39"/>
    <property type="match status" value="1"/>
</dbReference>
<dbReference type="HAMAP" id="MF_01579">
    <property type="entry name" value="16SrRNA_methyltr_F"/>
    <property type="match status" value="1"/>
</dbReference>
<dbReference type="InterPro" id="IPR031341">
    <property type="entry name" value="Methyltr_RsmF_N"/>
</dbReference>
<dbReference type="InterPro" id="IPR049560">
    <property type="entry name" value="MeTrfase_RsmB-F_NOP2_cat"/>
</dbReference>
<dbReference type="InterPro" id="IPR001678">
    <property type="entry name" value="MeTrfase_RsmB-F_NOP2_dom"/>
</dbReference>
<dbReference type="InterPro" id="IPR027391">
    <property type="entry name" value="Nol1_Nop2_Fmu_2"/>
</dbReference>
<dbReference type="InterPro" id="IPR011023">
    <property type="entry name" value="Nop2p"/>
</dbReference>
<dbReference type="InterPro" id="IPR023267">
    <property type="entry name" value="RCMT"/>
</dbReference>
<dbReference type="InterPro" id="IPR023545">
    <property type="entry name" value="rRNA_ssu_MeTfrase_F"/>
</dbReference>
<dbReference type="InterPro" id="IPR018314">
    <property type="entry name" value="RsmB/NOL1/NOP2-like_CS"/>
</dbReference>
<dbReference type="InterPro" id="IPR029063">
    <property type="entry name" value="SAM-dependent_MTases_sf"/>
</dbReference>
<dbReference type="InterPro" id="IPR048457">
    <property type="entry name" value="YebU_pre-PUA_dom"/>
</dbReference>
<dbReference type="NCBIfam" id="TIGR00446">
    <property type="entry name" value="nop2p"/>
    <property type="match status" value="1"/>
</dbReference>
<dbReference type="NCBIfam" id="NF008898">
    <property type="entry name" value="PRK11933.1"/>
    <property type="match status" value="1"/>
</dbReference>
<dbReference type="PANTHER" id="PTHR22807:SF30">
    <property type="entry name" value="28S RRNA (CYTOSINE(4447)-C(5))-METHYLTRANSFERASE-RELATED"/>
    <property type="match status" value="1"/>
</dbReference>
<dbReference type="PANTHER" id="PTHR22807">
    <property type="entry name" value="NOP2 YEAST -RELATED NOL1/NOP2/FMU SUN DOMAIN-CONTAINING"/>
    <property type="match status" value="1"/>
</dbReference>
<dbReference type="Pfam" id="PF01189">
    <property type="entry name" value="Methyltr_RsmB-F"/>
    <property type="match status" value="1"/>
</dbReference>
<dbReference type="Pfam" id="PF17125">
    <property type="entry name" value="Methyltr_RsmF_N"/>
    <property type="match status" value="1"/>
</dbReference>
<dbReference type="Pfam" id="PF13636">
    <property type="entry name" value="Methyltranf_PUA"/>
    <property type="match status" value="1"/>
</dbReference>
<dbReference type="Pfam" id="PF21150">
    <property type="entry name" value="YebU_pre-PUA_dom"/>
    <property type="match status" value="1"/>
</dbReference>
<dbReference type="PRINTS" id="PR02008">
    <property type="entry name" value="RCMTFAMILY"/>
</dbReference>
<dbReference type="SUPFAM" id="SSF53335">
    <property type="entry name" value="S-adenosyl-L-methionine-dependent methyltransferases"/>
    <property type="match status" value="1"/>
</dbReference>
<dbReference type="PROSITE" id="PS01153">
    <property type="entry name" value="NOL1_NOP2_SUN"/>
    <property type="match status" value="1"/>
</dbReference>
<dbReference type="PROSITE" id="PS51686">
    <property type="entry name" value="SAM_MT_RSMB_NOP"/>
    <property type="match status" value="1"/>
</dbReference>
<proteinExistence type="inferred from homology"/>
<protein>
    <recommendedName>
        <fullName evidence="1">Ribosomal RNA small subunit methyltransferase F</fullName>
        <ecNumber evidence="1">2.1.1.178</ecNumber>
    </recommendedName>
    <alternativeName>
        <fullName evidence="1">16S rRNA m5C1407 methyltransferase</fullName>
    </alternativeName>
    <alternativeName>
        <fullName evidence="1">rRNA (cytosine-C(5)-)-methyltransferase RsmF</fullName>
    </alternativeName>
</protein>
<organism>
    <name type="scientific">Shewanella woodyi (strain ATCC 51908 / MS32)</name>
    <dbReference type="NCBI Taxonomy" id="392500"/>
    <lineage>
        <taxon>Bacteria</taxon>
        <taxon>Pseudomonadati</taxon>
        <taxon>Pseudomonadota</taxon>
        <taxon>Gammaproteobacteria</taxon>
        <taxon>Alteromonadales</taxon>
        <taxon>Shewanellaceae</taxon>
        <taxon>Shewanella</taxon>
    </lineage>
</organism>
<accession>B1KQN1</accession>
<reference key="1">
    <citation type="submission" date="2008-02" db="EMBL/GenBank/DDBJ databases">
        <title>Complete sequence of Shewanella woodyi ATCC 51908.</title>
        <authorList>
            <consortium name="US DOE Joint Genome Institute"/>
            <person name="Copeland A."/>
            <person name="Lucas S."/>
            <person name="Lapidus A."/>
            <person name="Glavina del Rio T."/>
            <person name="Dalin E."/>
            <person name="Tice H."/>
            <person name="Bruce D."/>
            <person name="Goodwin L."/>
            <person name="Pitluck S."/>
            <person name="Sims D."/>
            <person name="Brettin T."/>
            <person name="Detter J.C."/>
            <person name="Han C."/>
            <person name="Kuske C.R."/>
            <person name="Schmutz J."/>
            <person name="Larimer F."/>
            <person name="Land M."/>
            <person name="Hauser L."/>
            <person name="Kyrpides N."/>
            <person name="Lykidis A."/>
            <person name="Zhao J.-S."/>
            <person name="Richardson P."/>
        </authorList>
    </citation>
    <scope>NUCLEOTIDE SEQUENCE [LARGE SCALE GENOMIC DNA]</scope>
    <source>
        <strain>ATCC 51908 / MS32</strain>
    </source>
</reference>
<comment type="function">
    <text evidence="1">Specifically methylates the cytosine at position 1407 (m5C1407) of 16S rRNA.</text>
</comment>
<comment type="catalytic activity">
    <reaction evidence="1">
        <text>cytidine(1407) in 16S rRNA + S-adenosyl-L-methionine = 5-methylcytidine(1407) in 16S rRNA + S-adenosyl-L-homocysteine + H(+)</text>
        <dbReference type="Rhea" id="RHEA:42756"/>
        <dbReference type="Rhea" id="RHEA-COMP:10223"/>
        <dbReference type="Rhea" id="RHEA-COMP:10224"/>
        <dbReference type="ChEBI" id="CHEBI:15378"/>
        <dbReference type="ChEBI" id="CHEBI:57856"/>
        <dbReference type="ChEBI" id="CHEBI:59789"/>
        <dbReference type="ChEBI" id="CHEBI:74483"/>
        <dbReference type="ChEBI" id="CHEBI:82748"/>
        <dbReference type="EC" id="2.1.1.178"/>
    </reaction>
</comment>
<comment type="subcellular location">
    <subcellularLocation>
        <location evidence="1">Cytoplasm</location>
    </subcellularLocation>
</comment>
<comment type="similarity">
    <text evidence="1">Belongs to the class I-like SAM-binding methyltransferase superfamily. RsmB/NOP family.</text>
</comment>
<gene>
    <name evidence="1" type="primary">rsmF</name>
    <name type="ordered locus">Swoo_1986</name>
</gene>
<keyword id="KW-0963">Cytoplasm</keyword>
<keyword id="KW-0489">Methyltransferase</keyword>
<keyword id="KW-1185">Reference proteome</keyword>
<keyword id="KW-0694">RNA-binding</keyword>
<keyword id="KW-0698">rRNA processing</keyword>
<keyword id="KW-0949">S-adenosyl-L-methionine</keyword>
<keyword id="KW-0808">Transferase</keyword>
<evidence type="ECO:0000255" key="1">
    <source>
        <dbReference type="HAMAP-Rule" id="MF_01579"/>
    </source>
</evidence>
<name>RSMF_SHEWM</name>
<feature type="chain" id="PRO_1000185646" description="Ribosomal RNA small subunit methyltransferase F">
    <location>
        <begin position="1"/>
        <end position="478"/>
    </location>
</feature>
<feature type="active site" description="Nucleophile" evidence="1">
    <location>
        <position position="243"/>
    </location>
</feature>
<feature type="binding site" evidence="1">
    <location>
        <begin position="121"/>
        <end position="127"/>
    </location>
    <ligand>
        <name>S-adenosyl-L-methionine</name>
        <dbReference type="ChEBI" id="CHEBI:59789"/>
    </ligand>
</feature>
<feature type="binding site" evidence="1">
    <location>
        <position position="145"/>
    </location>
    <ligand>
        <name>S-adenosyl-L-methionine</name>
        <dbReference type="ChEBI" id="CHEBI:59789"/>
    </ligand>
</feature>
<feature type="binding site" evidence="1">
    <location>
        <position position="172"/>
    </location>
    <ligand>
        <name>S-adenosyl-L-methionine</name>
        <dbReference type="ChEBI" id="CHEBI:59789"/>
    </ligand>
</feature>
<feature type="binding site" evidence="1">
    <location>
        <position position="190"/>
    </location>
    <ligand>
        <name>S-adenosyl-L-methionine</name>
        <dbReference type="ChEBI" id="CHEBI:59789"/>
    </ligand>
</feature>
<sequence length="478" mass="53653">MVQLNQDFINSIAKDMPAHLTMDDFISYSSKPLRPSIRINTLKISSDEFVTLMAAKGWTLDPIPWCSDGFWVALDNEIQLGNTIEHIQGLFYIQEASSMLPPTALFDGLDNSSEYTILDMASAPGSKTTQMASLMDNKGLLVANEYSSSRVKVLHANVQRMGVYNTALTHFDARVFGEYLYHQFDAILLDAPCSGEGTIRKDPLALRNWSLEENASIIETQKALIESAFLALKTGGSLVYSTCALSRSENQEVCEHLMSCFPQAVEFQSLSELFPDADKSCTSEGFLHVWPQIYDSEGFFIAKVRKVADVERQKPLPKAQRNFPFTAANNKTKDELSHYFKHTFGISLPKDGLIMERDLEYWLFPAKMADFIGKMRFQRIGLKLADGLKKGFKVRHEAIMALSDKHNAIELNESQAIEYLMGRDIPLQDGGKPQGEVILTYHHCALGVAKHLGKRLKNNLPRELVRDKVISAKAKTEL</sequence>